<protein>
    <recommendedName>
        <fullName evidence="1">UPF0735 ACT domain-containing protein SA1469</fullName>
    </recommendedName>
</protein>
<name>Y1469_STAAN</name>
<organism>
    <name type="scientific">Staphylococcus aureus (strain N315)</name>
    <dbReference type="NCBI Taxonomy" id="158879"/>
    <lineage>
        <taxon>Bacteria</taxon>
        <taxon>Bacillati</taxon>
        <taxon>Bacillota</taxon>
        <taxon>Bacilli</taxon>
        <taxon>Bacillales</taxon>
        <taxon>Staphylococcaceae</taxon>
        <taxon>Staphylococcus</taxon>
    </lineage>
</organism>
<comment type="similarity">
    <text evidence="1">Belongs to the UPF0735 family.</text>
</comment>
<feature type="chain" id="PRO_0000206476" description="UPF0735 ACT domain-containing protein SA1469">
    <location>
        <begin position="1"/>
        <end position="152"/>
    </location>
</feature>
<feature type="domain" description="ACT" evidence="1">
    <location>
        <begin position="75"/>
        <end position="150"/>
    </location>
</feature>
<gene>
    <name type="ordered locus">SA1469</name>
</gene>
<dbReference type="EMBL" id="BA000018">
    <property type="protein sequence ID" value="BAB42735.1"/>
    <property type="molecule type" value="Genomic_DNA"/>
</dbReference>
<dbReference type="PIR" id="B89947">
    <property type="entry name" value="B89947"/>
</dbReference>
<dbReference type="EnsemblBacteria" id="BAB42735">
    <property type="protein sequence ID" value="BAB42735"/>
    <property type="gene ID" value="BAB42735"/>
</dbReference>
<dbReference type="KEGG" id="sau:SA1469"/>
<dbReference type="HOGENOM" id="CLU_128147_0_0_9"/>
<dbReference type="Gene3D" id="3.30.70.260">
    <property type="match status" value="1"/>
</dbReference>
<dbReference type="HAMAP" id="MF_00707">
    <property type="entry name" value="UPF0735"/>
    <property type="match status" value="1"/>
</dbReference>
<dbReference type="InterPro" id="IPR045865">
    <property type="entry name" value="ACT-like_dom_sf"/>
</dbReference>
<dbReference type="InterPro" id="IPR002912">
    <property type="entry name" value="ACT_dom"/>
</dbReference>
<dbReference type="InterPro" id="IPR008310">
    <property type="entry name" value="UPF0735_ACT_dom-cont"/>
</dbReference>
<dbReference type="NCBIfam" id="NF003361">
    <property type="entry name" value="PRK04435.1"/>
    <property type="match status" value="1"/>
</dbReference>
<dbReference type="PIRSF" id="PIRSF025624">
    <property type="entry name" value="ACT_PheB"/>
    <property type="match status" value="1"/>
</dbReference>
<dbReference type="SUPFAM" id="SSF55021">
    <property type="entry name" value="ACT-like"/>
    <property type="match status" value="1"/>
</dbReference>
<dbReference type="PROSITE" id="PS51671">
    <property type="entry name" value="ACT"/>
    <property type="match status" value="1"/>
</dbReference>
<proteinExistence type="inferred from homology"/>
<evidence type="ECO:0000255" key="1">
    <source>
        <dbReference type="HAMAP-Rule" id="MF_00707"/>
    </source>
</evidence>
<reference key="1">
    <citation type="journal article" date="2001" name="Lancet">
        <title>Whole genome sequencing of meticillin-resistant Staphylococcus aureus.</title>
        <authorList>
            <person name="Kuroda M."/>
            <person name="Ohta T."/>
            <person name="Uchiyama I."/>
            <person name="Baba T."/>
            <person name="Yuzawa H."/>
            <person name="Kobayashi I."/>
            <person name="Cui L."/>
            <person name="Oguchi A."/>
            <person name="Aoki K."/>
            <person name="Nagai Y."/>
            <person name="Lian J.-Q."/>
            <person name="Ito T."/>
            <person name="Kanamori M."/>
            <person name="Matsumaru H."/>
            <person name="Maruyama A."/>
            <person name="Murakami H."/>
            <person name="Hosoyama A."/>
            <person name="Mizutani-Ui Y."/>
            <person name="Takahashi N.K."/>
            <person name="Sawano T."/>
            <person name="Inoue R."/>
            <person name="Kaito C."/>
            <person name="Sekimizu K."/>
            <person name="Hirakawa H."/>
            <person name="Kuhara S."/>
            <person name="Goto S."/>
            <person name="Yabuzaki J."/>
            <person name="Kanehisa M."/>
            <person name="Yamashita A."/>
            <person name="Oshima K."/>
            <person name="Furuya K."/>
            <person name="Yoshino C."/>
            <person name="Shiba T."/>
            <person name="Hattori M."/>
            <person name="Ogasawara N."/>
            <person name="Hayashi H."/>
            <person name="Hiramatsu K."/>
        </authorList>
    </citation>
    <scope>NUCLEOTIDE SEQUENCE [LARGE SCALE GENOMIC DNA]</scope>
    <source>
        <strain>N315</strain>
    </source>
</reference>
<accession>P67641</accession>
<accession>Q99TL0</accession>
<sequence>MMDNKDYKKFYLIREDVLPESVVKTLKIKDALKSDPTLSIYDAVKQFDLSRSAFYKYRETIFPVDDKMLDHREFTLILYVTDIVGMLARVLDVISKLELSVLTIHQSIPMEEKATITLSLNAKSKETSVEDVIGALRNLDYVSKVELISMSM</sequence>